<reference key="1">
    <citation type="submission" date="2007-04" db="EMBL/GenBank/DDBJ databases">
        <title>Complete sequence of Pseudomonas mendocina ymp.</title>
        <authorList>
            <consortium name="US DOE Joint Genome Institute"/>
            <person name="Copeland A."/>
            <person name="Lucas S."/>
            <person name="Lapidus A."/>
            <person name="Barry K."/>
            <person name="Glavina del Rio T."/>
            <person name="Dalin E."/>
            <person name="Tice H."/>
            <person name="Pitluck S."/>
            <person name="Kiss H."/>
            <person name="Brettin T."/>
            <person name="Detter J.C."/>
            <person name="Bruce D."/>
            <person name="Han C."/>
            <person name="Schmutz J."/>
            <person name="Larimer F."/>
            <person name="Land M."/>
            <person name="Hauser L."/>
            <person name="Kyrpides N."/>
            <person name="Mikhailova N."/>
            <person name="Hersman L."/>
            <person name="Dubois J."/>
            <person name="Maurice P."/>
            <person name="Richardson P."/>
        </authorList>
    </citation>
    <scope>NUCLEOTIDE SEQUENCE [LARGE SCALE GENOMIC DNA]</scope>
    <source>
        <strain>ymp</strain>
    </source>
</reference>
<evidence type="ECO:0000255" key="1">
    <source>
        <dbReference type="HAMAP-Rule" id="MF_01588"/>
    </source>
</evidence>
<accession>A4XVY5</accession>
<dbReference type="EC" id="6.5.1.2" evidence="1"/>
<dbReference type="EMBL" id="CP000680">
    <property type="protein sequence ID" value="ABP85501.1"/>
    <property type="molecule type" value="Genomic_DNA"/>
</dbReference>
<dbReference type="SMR" id="A4XVY5"/>
<dbReference type="STRING" id="399739.Pmen_2746"/>
<dbReference type="KEGG" id="pmy:Pmen_2746"/>
<dbReference type="PATRIC" id="fig|399739.8.peg.2777"/>
<dbReference type="eggNOG" id="COG0272">
    <property type="taxonomic scope" value="Bacteria"/>
</dbReference>
<dbReference type="HOGENOM" id="CLU_007764_2_1_6"/>
<dbReference type="OrthoDB" id="9759736at2"/>
<dbReference type="GO" id="GO:0005829">
    <property type="term" value="C:cytosol"/>
    <property type="evidence" value="ECO:0007669"/>
    <property type="project" value="TreeGrafter"/>
</dbReference>
<dbReference type="GO" id="GO:0003677">
    <property type="term" value="F:DNA binding"/>
    <property type="evidence" value="ECO:0007669"/>
    <property type="project" value="InterPro"/>
</dbReference>
<dbReference type="GO" id="GO:0003911">
    <property type="term" value="F:DNA ligase (NAD+) activity"/>
    <property type="evidence" value="ECO:0007669"/>
    <property type="project" value="UniProtKB-UniRule"/>
</dbReference>
<dbReference type="GO" id="GO:0046872">
    <property type="term" value="F:metal ion binding"/>
    <property type="evidence" value="ECO:0007669"/>
    <property type="project" value="UniProtKB-KW"/>
</dbReference>
<dbReference type="GO" id="GO:0006281">
    <property type="term" value="P:DNA repair"/>
    <property type="evidence" value="ECO:0007669"/>
    <property type="project" value="UniProtKB-KW"/>
</dbReference>
<dbReference type="GO" id="GO:0006260">
    <property type="term" value="P:DNA replication"/>
    <property type="evidence" value="ECO:0007669"/>
    <property type="project" value="UniProtKB-KW"/>
</dbReference>
<dbReference type="CDD" id="cd17748">
    <property type="entry name" value="BRCT_DNA_ligase_like"/>
    <property type="match status" value="1"/>
</dbReference>
<dbReference type="CDD" id="cd00114">
    <property type="entry name" value="LIGANc"/>
    <property type="match status" value="1"/>
</dbReference>
<dbReference type="FunFam" id="1.10.150.20:FF:000006">
    <property type="entry name" value="DNA ligase"/>
    <property type="match status" value="1"/>
</dbReference>
<dbReference type="FunFam" id="1.10.150.20:FF:000007">
    <property type="entry name" value="DNA ligase"/>
    <property type="match status" value="1"/>
</dbReference>
<dbReference type="FunFam" id="1.10.287.610:FF:000002">
    <property type="entry name" value="DNA ligase"/>
    <property type="match status" value="1"/>
</dbReference>
<dbReference type="FunFam" id="2.40.50.140:FF:000012">
    <property type="entry name" value="DNA ligase"/>
    <property type="match status" value="1"/>
</dbReference>
<dbReference type="FunFam" id="3.30.470.30:FF:000001">
    <property type="entry name" value="DNA ligase"/>
    <property type="match status" value="1"/>
</dbReference>
<dbReference type="Gene3D" id="6.20.10.30">
    <property type="match status" value="1"/>
</dbReference>
<dbReference type="Gene3D" id="1.10.150.20">
    <property type="entry name" value="5' to 3' exonuclease, C-terminal subdomain"/>
    <property type="match status" value="3"/>
</dbReference>
<dbReference type="Gene3D" id="3.40.50.10190">
    <property type="entry name" value="BRCT domain"/>
    <property type="match status" value="1"/>
</dbReference>
<dbReference type="Gene3D" id="3.30.470.30">
    <property type="entry name" value="DNA ligase/mRNA capping enzyme"/>
    <property type="match status" value="1"/>
</dbReference>
<dbReference type="Gene3D" id="1.10.287.610">
    <property type="entry name" value="Helix hairpin bin"/>
    <property type="match status" value="1"/>
</dbReference>
<dbReference type="Gene3D" id="2.40.50.140">
    <property type="entry name" value="Nucleic acid-binding proteins"/>
    <property type="match status" value="1"/>
</dbReference>
<dbReference type="HAMAP" id="MF_01588">
    <property type="entry name" value="DNA_ligase_A"/>
    <property type="match status" value="1"/>
</dbReference>
<dbReference type="InterPro" id="IPR001357">
    <property type="entry name" value="BRCT_dom"/>
</dbReference>
<dbReference type="InterPro" id="IPR036420">
    <property type="entry name" value="BRCT_dom_sf"/>
</dbReference>
<dbReference type="InterPro" id="IPR041663">
    <property type="entry name" value="DisA/LigA_HHH"/>
</dbReference>
<dbReference type="InterPro" id="IPR001679">
    <property type="entry name" value="DNA_ligase"/>
</dbReference>
<dbReference type="InterPro" id="IPR018239">
    <property type="entry name" value="DNA_ligase_AS"/>
</dbReference>
<dbReference type="InterPro" id="IPR033136">
    <property type="entry name" value="DNA_ligase_CS"/>
</dbReference>
<dbReference type="InterPro" id="IPR013839">
    <property type="entry name" value="DNAligase_adenylation"/>
</dbReference>
<dbReference type="InterPro" id="IPR013840">
    <property type="entry name" value="DNAligase_N"/>
</dbReference>
<dbReference type="InterPro" id="IPR003583">
    <property type="entry name" value="Hlx-hairpin-Hlx_DNA-bd_motif"/>
</dbReference>
<dbReference type="InterPro" id="IPR012340">
    <property type="entry name" value="NA-bd_OB-fold"/>
</dbReference>
<dbReference type="InterPro" id="IPR004150">
    <property type="entry name" value="NAD_DNA_ligase_OB"/>
</dbReference>
<dbReference type="InterPro" id="IPR010994">
    <property type="entry name" value="RuvA_2-like"/>
</dbReference>
<dbReference type="NCBIfam" id="TIGR00575">
    <property type="entry name" value="dnlj"/>
    <property type="match status" value="1"/>
</dbReference>
<dbReference type="NCBIfam" id="NF005932">
    <property type="entry name" value="PRK07956.1"/>
    <property type="match status" value="1"/>
</dbReference>
<dbReference type="PANTHER" id="PTHR23389">
    <property type="entry name" value="CHROMOSOME TRANSMISSION FIDELITY FACTOR 18"/>
    <property type="match status" value="1"/>
</dbReference>
<dbReference type="PANTHER" id="PTHR23389:SF9">
    <property type="entry name" value="DNA LIGASE"/>
    <property type="match status" value="1"/>
</dbReference>
<dbReference type="Pfam" id="PF00533">
    <property type="entry name" value="BRCT"/>
    <property type="match status" value="1"/>
</dbReference>
<dbReference type="Pfam" id="PF01653">
    <property type="entry name" value="DNA_ligase_aden"/>
    <property type="match status" value="1"/>
</dbReference>
<dbReference type="Pfam" id="PF03120">
    <property type="entry name" value="DNA_ligase_OB"/>
    <property type="match status" value="1"/>
</dbReference>
<dbReference type="Pfam" id="PF12826">
    <property type="entry name" value="HHH_2"/>
    <property type="match status" value="1"/>
</dbReference>
<dbReference type="Pfam" id="PF22745">
    <property type="entry name" value="Nlig-Ia"/>
    <property type="match status" value="1"/>
</dbReference>
<dbReference type="PIRSF" id="PIRSF001604">
    <property type="entry name" value="LigA"/>
    <property type="match status" value="1"/>
</dbReference>
<dbReference type="SMART" id="SM00292">
    <property type="entry name" value="BRCT"/>
    <property type="match status" value="1"/>
</dbReference>
<dbReference type="SMART" id="SM00278">
    <property type="entry name" value="HhH1"/>
    <property type="match status" value="4"/>
</dbReference>
<dbReference type="SMART" id="SM00532">
    <property type="entry name" value="LIGANc"/>
    <property type="match status" value="1"/>
</dbReference>
<dbReference type="SUPFAM" id="SSF52113">
    <property type="entry name" value="BRCT domain"/>
    <property type="match status" value="1"/>
</dbReference>
<dbReference type="SUPFAM" id="SSF56091">
    <property type="entry name" value="DNA ligase/mRNA capping enzyme, catalytic domain"/>
    <property type="match status" value="1"/>
</dbReference>
<dbReference type="SUPFAM" id="SSF50249">
    <property type="entry name" value="Nucleic acid-binding proteins"/>
    <property type="match status" value="1"/>
</dbReference>
<dbReference type="SUPFAM" id="SSF47781">
    <property type="entry name" value="RuvA domain 2-like"/>
    <property type="match status" value="2"/>
</dbReference>
<dbReference type="PROSITE" id="PS50172">
    <property type="entry name" value="BRCT"/>
    <property type="match status" value="1"/>
</dbReference>
<dbReference type="PROSITE" id="PS01055">
    <property type="entry name" value="DNA_LIGASE_N1"/>
    <property type="match status" value="1"/>
</dbReference>
<dbReference type="PROSITE" id="PS01056">
    <property type="entry name" value="DNA_LIGASE_N2"/>
    <property type="match status" value="1"/>
</dbReference>
<gene>
    <name evidence="1" type="primary">ligA</name>
    <name type="ordered locus">Pmen_2746</name>
</gene>
<keyword id="KW-0227">DNA damage</keyword>
<keyword id="KW-0234">DNA repair</keyword>
<keyword id="KW-0235">DNA replication</keyword>
<keyword id="KW-0436">Ligase</keyword>
<keyword id="KW-0460">Magnesium</keyword>
<keyword id="KW-0464">Manganese</keyword>
<keyword id="KW-0479">Metal-binding</keyword>
<keyword id="KW-0520">NAD</keyword>
<keyword id="KW-0862">Zinc</keyword>
<protein>
    <recommendedName>
        <fullName evidence="1">DNA ligase</fullName>
        <ecNumber evidence="1">6.5.1.2</ecNumber>
    </recommendedName>
    <alternativeName>
        <fullName evidence="1">Polydeoxyribonucleotide synthase [NAD(+)]</fullName>
    </alternativeName>
</protein>
<sequence>MTDAAQRISELRNELDAHNYRYYVLDEPSVPDAEYDRLFRELQALEAEHPELVTPESPTQRVGGEALSAFGEVRHEVPMLSLGNAFEEDDLRAFDRSVQSGLGLAGGDLFGGGAEVEYSCEPKLDGLAVSLRYENGQLVRGATRGDGSTGEDISANVRTIRNVPLKLQGEGWPQVLEVRGEVFMPKAGFEELNARQAEAGGKTFANPRNAAAGSLRQLDPKITASRPLEFCCYGVGQVSGELPGTQVAMLQQLKAWGIPISRELKLAKGVEACLDYYRDIGQRRMSLAYDIDGVVFKVNNIEDQQQLGFRARTPHWAIAHKFPAQEELTELLDVEFQVGRTGAVTPVARLKPVKVAGVMVANATLHNMDEVARLGVMIGDTVIIRRAGDVIPQVMAVVPERRPADARPVHIPEQCPVCGSAVERTQLIKRSKGKASVSEGSVYRCVGRLSCQAQLKQAIIHFVSRRAMDIEGLGDKTIEQLVDEKLIGSPADLYKLTYEQIIGLEGFAEVSSNKLLAAIENSKRPSLARFIYALGIPDVGEETAKVLARSLASLERVRQALPEVLTYLPDIGLEVAHEIHSFFEDAHNQQVISALLGECGLELQDEGELSAEFSAVATLGGMLDKLNIPTVGPGAAQKLAERFGSLEGVLNGDWLDMRQALPERQAKAVREFFDETANAQRARAIEQQLREFGMHWESEKKVAEGLPLAGQTWVLTGTLEVMSRDVAKEKLESLGAKVAGSVSAKTHCVVAGPGAGSKLAKASELGVKVLDEAQFLEQLKSYGIEA</sequence>
<name>DNLJ_ECTM1</name>
<comment type="function">
    <text evidence="1">DNA ligase that catalyzes the formation of phosphodiester linkages between 5'-phosphoryl and 3'-hydroxyl groups in double-stranded DNA using NAD as a coenzyme and as the energy source for the reaction. It is essential for DNA replication and repair of damaged DNA.</text>
</comment>
<comment type="catalytic activity">
    <reaction evidence="1">
        <text>NAD(+) + (deoxyribonucleotide)n-3'-hydroxyl + 5'-phospho-(deoxyribonucleotide)m = (deoxyribonucleotide)n+m + AMP + beta-nicotinamide D-nucleotide.</text>
        <dbReference type="EC" id="6.5.1.2"/>
    </reaction>
</comment>
<comment type="cofactor">
    <cofactor evidence="1">
        <name>Mg(2+)</name>
        <dbReference type="ChEBI" id="CHEBI:18420"/>
    </cofactor>
    <cofactor evidence="1">
        <name>Mn(2+)</name>
        <dbReference type="ChEBI" id="CHEBI:29035"/>
    </cofactor>
</comment>
<comment type="similarity">
    <text evidence="1">Belongs to the NAD-dependent DNA ligase family. LigA subfamily.</text>
</comment>
<organism>
    <name type="scientific">Ectopseudomonas mendocina (strain ymp)</name>
    <name type="common">Pseudomonas mendocina</name>
    <dbReference type="NCBI Taxonomy" id="399739"/>
    <lineage>
        <taxon>Bacteria</taxon>
        <taxon>Pseudomonadati</taxon>
        <taxon>Pseudomonadota</taxon>
        <taxon>Gammaproteobacteria</taxon>
        <taxon>Pseudomonadales</taxon>
        <taxon>Pseudomonadaceae</taxon>
        <taxon>Ectopseudomonas</taxon>
    </lineage>
</organism>
<proteinExistence type="inferred from homology"/>
<feature type="chain" id="PRO_0000340368" description="DNA ligase">
    <location>
        <begin position="1"/>
        <end position="786"/>
    </location>
</feature>
<feature type="domain" description="BRCT" evidence="1">
    <location>
        <begin position="703"/>
        <end position="786"/>
    </location>
</feature>
<feature type="active site" description="N6-AMP-lysine intermediate" evidence="1">
    <location>
        <position position="123"/>
    </location>
</feature>
<feature type="binding site" evidence="1">
    <location>
        <begin position="32"/>
        <end position="36"/>
    </location>
    <ligand>
        <name>NAD(+)</name>
        <dbReference type="ChEBI" id="CHEBI:57540"/>
    </ligand>
</feature>
<feature type="binding site" evidence="1">
    <location>
        <begin position="81"/>
        <end position="82"/>
    </location>
    <ligand>
        <name>NAD(+)</name>
        <dbReference type="ChEBI" id="CHEBI:57540"/>
    </ligand>
</feature>
<feature type="binding site" evidence="1">
    <location>
        <position position="121"/>
    </location>
    <ligand>
        <name>NAD(+)</name>
        <dbReference type="ChEBI" id="CHEBI:57540"/>
    </ligand>
</feature>
<feature type="binding site" evidence="1">
    <location>
        <position position="144"/>
    </location>
    <ligand>
        <name>NAD(+)</name>
        <dbReference type="ChEBI" id="CHEBI:57540"/>
    </ligand>
</feature>
<feature type="binding site" evidence="1">
    <location>
        <position position="181"/>
    </location>
    <ligand>
        <name>NAD(+)</name>
        <dbReference type="ChEBI" id="CHEBI:57540"/>
    </ligand>
</feature>
<feature type="binding site" evidence="1">
    <location>
        <position position="297"/>
    </location>
    <ligand>
        <name>NAD(+)</name>
        <dbReference type="ChEBI" id="CHEBI:57540"/>
    </ligand>
</feature>
<feature type="binding site" evidence="1">
    <location>
        <position position="321"/>
    </location>
    <ligand>
        <name>NAD(+)</name>
        <dbReference type="ChEBI" id="CHEBI:57540"/>
    </ligand>
</feature>
<feature type="binding site" evidence="1">
    <location>
        <position position="415"/>
    </location>
    <ligand>
        <name>Zn(2+)</name>
        <dbReference type="ChEBI" id="CHEBI:29105"/>
    </ligand>
</feature>
<feature type="binding site" evidence="1">
    <location>
        <position position="418"/>
    </location>
    <ligand>
        <name>Zn(2+)</name>
        <dbReference type="ChEBI" id="CHEBI:29105"/>
    </ligand>
</feature>
<feature type="binding site" evidence="1">
    <location>
        <position position="445"/>
    </location>
    <ligand>
        <name>Zn(2+)</name>
        <dbReference type="ChEBI" id="CHEBI:29105"/>
    </ligand>
</feature>
<feature type="binding site" evidence="1">
    <location>
        <position position="451"/>
    </location>
    <ligand>
        <name>Zn(2+)</name>
        <dbReference type="ChEBI" id="CHEBI:29105"/>
    </ligand>
</feature>